<feature type="chain" id="PRO_0000347582" description="Alanine--tRNA ligase">
    <location>
        <begin position="1"/>
        <end position="874"/>
    </location>
</feature>
<feature type="binding site" evidence="1">
    <location>
        <position position="564"/>
    </location>
    <ligand>
        <name>Zn(2+)</name>
        <dbReference type="ChEBI" id="CHEBI:29105"/>
    </ligand>
</feature>
<feature type="binding site" evidence="1">
    <location>
        <position position="568"/>
    </location>
    <ligand>
        <name>Zn(2+)</name>
        <dbReference type="ChEBI" id="CHEBI:29105"/>
    </ligand>
</feature>
<feature type="binding site" evidence="1">
    <location>
        <position position="665"/>
    </location>
    <ligand>
        <name>Zn(2+)</name>
        <dbReference type="ChEBI" id="CHEBI:29105"/>
    </ligand>
</feature>
<feature type="binding site" evidence="1">
    <location>
        <position position="669"/>
    </location>
    <ligand>
        <name>Zn(2+)</name>
        <dbReference type="ChEBI" id="CHEBI:29105"/>
    </ligand>
</feature>
<name>SYA_DELAS</name>
<reference key="1">
    <citation type="submission" date="2007-11" db="EMBL/GenBank/DDBJ databases">
        <title>Complete sequence of Delftia acidovorans DSM 14801 / SPH-1.</title>
        <authorList>
            <person name="Copeland A."/>
            <person name="Lucas S."/>
            <person name="Lapidus A."/>
            <person name="Barry K."/>
            <person name="Glavina del Rio T."/>
            <person name="Dalin E."/>
            <person name="Tice H."/>
            <person name="Pitluck S."/>
            <person name="Lowry S."/>
            <person name="Clum A."/>
            <person name="Schmutz J."/>
            <person name="Larimer F."/>
            <person name="Land M."/>
            <person name="Hauser L."/>
            <person name="Kyrpides N."/>
            <person name="Kim E."/>
            <person name="Schleheck D."/>
            <person name="Richardson P."/>
        </authorList>
    </citation>
    <scope>NUCLEOTIDE SEQUENCE [LARGE SCALE GENOMIC DNA]</scope>
    <source>
        <strain>DSM 14801 / SPH-1</strain>
    </source>
</reference>
<gene>
    <name evidence="1" type="primary">alaS</name>
    <name type="ordered locus">Daci_4054</name>
</gene>
<proteinExistence type="inferred from homology"/>
<organism>
    <name type="scientific">Delftia acidovorans (strain DSM 14801 / SPH-1)</name>
    <dbReference type="NCBI Taxonomy" id="398578"/>
    <lineage>
        <taxon>Bacteria</taxon>
        <taxon>Pseudomonadati</taxon>
        <taxon>Pseudomonadota</taxon>
        <taxon>Betaproteobacteria</taxon>
        <taxon>Burkholderiales</taxon>
        <taxon>Comamonadaceae</taxon>
        <taxon>Delftia</taxon>
    </lineage>
</organism>
<protein>
    <recommendedName>
        <fullName evidence="1">Alanine--tRNA ligase</fullName>
        <ecNumber evidence="1">6.1.1.7</ecNumber>
    </recommendedName>
    <alternativeName>
        <fullName evidence="1">Alanyl-tRNA synthetase</fullName>
        <shortName evidence="1">AlaRS</shortName>
    </alternativeName>
</protein>
<dbReference type="EC" id="6.1.1.7" evidence="1"/>
<dbReference type="EMBL" id="CP000884">
    <property type="protein sequence ID" value="ABX36685.1"/>
    <property type="molecule type" value="Genomic_DNA"/>
</dbReference>
<dbReference type="RefSeq" id="WP_012205879.1">
    <property type="nucleotide sequence ID" value="NC_010002.1"/>
</dbReference>
<dbReference type="SMR" id="A9C0B9"/>
<dbReference type="STRING" id="398578.Daci_4054"/>
<dbReference type="GeneID" id="24116473"/>
<dbReference type="KEGG" id="dac:Daci_4054"/>
<dbReference type="eggNOG" id="COG0013">
    <property type="taxonomic scope" value="Bacteria"/>
</dbReference>
<dbReference type="HOGENOM" id="CLU_004485_1_1_4"/>
<dbReference type="Proteomes" id="UP000000784">
    <property type="component" value="Chromosome"/>
</dbReference>
<dbReference type="GO" id="GO:0005829">
    <property type="term" value="C:cytosol"/>
    <property type="evidence" value="ECO:0007669"/>
    <property type="project" value="TreeGrafter"/>
</dbReference>
<dbReference type="GO" id="GO:0004813">
    <property type="term" value="F:alanine-tRNA ligase activity"/>
    <property type="evidence" value="ECO:0007669"/>
    <property type="project" value="UniProtKB-UniRule"/>
</dbReference>
<dbReference type="GO" id="GO:0002161">
    <property type="term" value="F:aminoacyl-tRNA deacylase activity"/>
    <property type="evidence" value="ECO:0007669"/>
    <property type="project" value="TreeGrafter"/>
</dbReference>
<dbReference type="GO" id="GO:0005524">
    <property type="term" value="F:ATP binding"/>
    <property type="evidence" value="ECO:0007669"/>
    <property type="project" value="UniProtKB-UniRule"/>
</dbReference>
<dbReference type="GO" id="GO:0000049">
    <property type="term" value="F:tRNA binding"/>
    <property type="evidence" value="ECO:0007669"/>
    <property type="project" value="UniProtKB-KW"/>
</dbReference>
<dbReference type="GO" id="GO:0008270">
    <property type="term" value="F:zinc ion binding"/>
    <property type="evidence" value="ECO:0007669"/>
    <property type="project" value="UniProtKB-UniRule"/>
</dbReference>
<dbReference type="GO" id="GO:0006419">
    <property type="term" value="P:alanyl-tRNA aminoacylation"/>
    <property type="evidence" value="ECO:0007669"/>
    <property type="project" value="UniProtKB-UniRule"/>
</dbReference>
<dbReference type="GO" id="GO:0045892">
    <property type="term" value="P:negative regulation of DNA-templated transcription"/>
    <property type="evidence" value="ECO:0007669"/>
    <property type="project" value="TreeGrafter"/>
</dbReference>
<dbReference type="CDD" id="cd00673">
    <property type="entry name" value="AlaRS_core"/>
    <property type="match status" value="1"/>
</dbReference>
<dbReference type="FunFam" id="2.40.30.130:FF:000001">
    <property type="entry name" value="Alanine--tRNA ligase"/>
    <property type="match status" value="1"/>
</dbReference>
<dbReference type="FunFam" id="3.10.310.40:FF:000001">
    <property type="entry name" value="Alanine--tRNA ligase"/>
    <property type="match status" value="1"/>
</dbReference>
<dbReference type="FunFam" id="3.30.54.20:FF:000001">
    <property type="entry name" value="Alanine--tRNA ligase"/>
    <property type="match status" value="1"/>
</dbReference>
<dbReference type="FunFam" id="3.30.930.10:FF:000004">
    <property type="entry name" value="Alanine--tRNA ligase"/>
    <property type="match status" value="1"/>
</dbReference>
<dbReference type="FunFam" id="3.30.980.10:FF:000004">
    <property type="entry name" value="Alanine--tRNA ligase, cytoplasmic"/>
    <property type="match status" value="1"/>
</dbReference>
<dbReference type="Gene3D" id="2.40.30.130">
    <property type="match status" value="1"/>
</dbReference>
<dbReference type="Gene3D" id="3.10.310.40">
    <property type="match status" value="1"/>
</dbReference>
<dbReference type="Gene3D" id="3.30.54.20">
    <property type="match status" value="1"/>
</dbReference>
<dbReference type="Gene3D" id="6.10.250.550">
    <property type="match status" value="1"/>
</dbReference>
<dbReference type="Gene3D" id="3.30.930.10">
    <property type="entry name" value="Bira Bifunctional Protein, Domain 2"/>
    <property type="match status" value="1"/>
</dbReference>
<dbReference type="Gene3D" id="3.30.980.10">
    <property type="entry name" value="Threonyl-trna Synthetase, Chain A, domain 2"/>
    <property type="match status" value="1"/>
</dbReference>
<dbReference type="HAMAP" id="MF_00036_B">
    <property type="entry name" value="Ala_tRNA_synth_B"/>
    <property type="match status" value="1"/>
</dbReference>
<dbReference type="InterPro" id="IPR045864">
    <property type="entry name" value="aa-tRNA-synth_II/BPL/LPL"/>
</dbReference>
<dbReference type="InterPro" id="IPR002318">
    <property type="entry name" value="Ala-tRNA-lgiase_IIc"/>
</dbReference>
<dbReference type="InterPro" id="IPR018162">
    <property type="entry name" value="Ala-tRNA-ligase_IIc_anticod-bd"/>
</dbReference>
<dbReference type="InterPro" id="IPR018165">
    <property type="entry name" value="Ala-tRNA-synth_IIc_core"/>
</dbReference>
<dbReference type="InterPro" id="IPR018164">
    <property type="entry name" value="Ala-tRNA-synth_IIc_N"/>
</dbReference>
<dbReference type="InterPro" id="IPR050058">
    <property type="entry name" value="Ala-tRNA_ligase"/>
</dbReference>
<dbReference type="InterPro" id="IPR023033">
    <property type="entry name" value="Ala_tRNA_ligase_euk/bac"/>
</dbReference>
<dbReference type="InterPro" id="IPR003156">
    <property type="entry name" value="DHHA1_dom"/>
</dbReference>
<dbReference type="InterPro" id="IPR018163">
    <property type="entry name" value="Thr/Ala-tRNA-synth_IIc_edit"/>
</dbReference>
<dbReference type="InterPro" id="IPR009000">
    <property type="entry name" value="Transl_B-barrel_sf"/>
</dbReference>
<dbReference type="InterPro" id="IPR012947">
    <property type="entry name" value="tRNA_SAD"/>
</dbReference>
<dbReference type="NCBIfam" id="TIGR00344">
    <property type="entry name" value="alaS"/>
    <property type="match status" value="1"/>
</dbReference>
<dbReference type="PANTHER" id="PTHR11777:SF9">
    <property type="entry name" value="ALANINE--TRNA LIGASE, CYTOPLASMIC"/>
    <property type="match status" value="1"/>
</dbReference>
<dbReference type="PANTHER" id="PTHR11777">
    <property type="entry name" value="ALANYL-TRNA SYNTHETASE"/>
    <property type="match status" value="1"/>
</dbReference>
<dbReference type="Pfam" id="PF02272">
    <property type="entry name" value="DHHA1"/>
    <property type="match status" value="1"/>
</dbReference>
<dbReference type="Pfam" id="PF01411">
    <property type="entry name" value="tRNA-synt_2c"/>
    <property type="match status" value="1"/>
</dbReference>
<dbReference type="Pfam" id="PF07973">
    <property type="entry name" value="tRNA_SAD"/>
    <property type="match status" value="1"/>
</dbReference>
<dbReference type="PRINTS" id="PR00980">
    <property type="entry name" value="TRNASYNTHALA"/>
</dbReference>
<dbReference type="SMART" id="SM00863">
    <property type="entry name" value="tRNA_SAD"/>
    <property type="match status" value="1"/>
</dbReference>
<dbReference type="SUPFAM" id="SSF55681">
    <property type="entry name" value="Class II aaRS and biotin synthetases"/>
    <property type="match status" value="1"/>
</dbReference>
<dbReference type="SUPFAM" id="SSF101353">
    <property type="entry name" value="Putative anticodon-binding domain of alanyl-tRNA synthetase (AlaRS)"/>
    <property type="match status" value="1"/>
</dbReference>
<dbReference type="SUPFAM" id="SSF55186">
    <property type="entry name" value="ThrRS/AlaRS common domain"/>
    <property type="match status" value="1"/>
</dbReference>
<dbReference type="SUPFAM" id="SSF50447">
    <property type="entry name" value="Translation proteins"/>
    <property type="match status" value="1"/>
</dbReference>
<dbReference type="PROSITE" id="PS50860">
    <property type="entry name" value="AA_TRNA_LIGASE_II_ALA"/>
    <property type="match status" value="1"/>
</dbReference>
<keyword id="KW-0030">Aminoacyl-tRNA synthetase</keyword>
<keyword id="KW-0067">ATP-binding</keyword>
<keyword id="KW-0963">Cytoplasm</keyword>
<keyword id="KW-0436">Ligase</keyword>
<keyword id="KW-0479">Metal-binding</keyword>
<keyword id="KW-0547">Nucleotide-binding</keyword>
<keyword id="KW-0648">Protein biosynthesis</keyword>
<keyword id="KW-1185">Reference proteome</keyword>
<keyword id="KW-0694">RNA-binding</keyword>
<keyword id="KW-0820">tRNA-binding</keyword>
<keyword id="KW-0862">Zinc</keyword>
<accession>A9C0B9</accession>
<comment type="function">
    <text evidence="1">Catalyzes the attachment of alanine to tRNA(Ala) in a two-step reaction: alanine is first activated by ATP to form Ala-AMP and then transferred to the acceptor end of tRNA(Ala). Also edits incorrectly charged Ser-tRNA(Ala) and Gly-tRNA(Ala) via its editing domain.</text>
</comment>
<comment type="catalytic activity">
    <reaction evidence="1">
        <text>tRNA(Ala) + L-alanine + ATP = L-alanyl-tRNA(Ala) + AMP + diphosphate</text>
        <dbReference type="Rhea" id="RHEA:12540"/>
        <dbReference type="Rhea" id="RHEA-COMP:9657"/>
        <dbReference type="Rhea" id="RHEA-COMP:9923"/>
        <dbReference type="ChEBI" id="CHEBI:30616"/>
        <dbReference type="ChEBI" id="CHEBI:33019"/>
        <dbReference type="ChEBI" id="CHEBI:57972"/>
        <dbReference type="ChEBI" id="CHEBI:78442"/>
        <dbReference type="ChEBI" id="CHEBI:78497"/>
        <dbReference type="ChEBI" id="CHEBI:456215"/>
        <dbReference type="EC" id="6.1.1.7"/>
    </reaction>
</comment>
<comment type="cofactor">
    <cofactor evidence="1">
        <name>Zn(2+)</name>
        <dbReference type="ChEBI" id="CHEBI:29105"/>
    </cofactor>
    <text evidence="1">Binds 1 zinc ion per subunit.</text>
</comment>
<comment type="subcellular location">
    <subcellularLocation>
        <location evidence="1">Cytoplasm</location>
    </subcellularLocation>
</comment>
<comment type="domain">
    <text evidence="1">Consists of three domains; the N-terminal catalytic domain, the editing domain and the C-terminal C-Ala domain. The editing domain removes incorrectly charged amino acids, while the C-Ala domain, along with tRNA(Ala), serves as a bridge to cooperatively bring together the editing and aminoacylation centers thus stimulating deacylation of misacylated tRNAs.</text>
</comment>
<comment type="similarity">
    <text evidence="1">Belongs to the class-II aminoacyl-tRNA synthetase family.</text>
</comment>
<sequence>MSTPTFTVADIRKSFLDFFASKGHTIVESSPLVPGNDPTLMFTNSGMVQFKDVFLGTDKRPYKRATSVQTCLRAGGKHNDLENVGYTARHHTFFEMLGNWSFGDYFKRESLKWAWELLTEVYKLPKERLLATVYAEDDEAYDIWTKEIGLPPERVIRIGDNKGGRYKSDNFWMMADTGPCGPCSEIFYDHGAHVAGGPPGSPDEDGDRFIEIWNNVFMQFDMDEQGNVKPLPAPCVDTGMGLERLAAILQHVHSNYEIDLFQALIKAAARETHIADIETPSLKVIADHIRATAFLVADGVIPSNEGRGYVQRRIVRRAIRHGYKLGQKTPFFHKLVKDLVAVMGDAYPKIREQEARITEVLRVEEERFFETLANGMEILDAALAGGAKVLPGDVAFKLHDTYGFPLDLTNDVCRERGLSVDEAGFQTAMEEQKNKARAAGKFKMDRALEYTGDANAFTGYQKLAEAAKVVALYAEGSAVQELKAGQSGVVVLDTTPFYAESGGQVGDQGVISTAGARFAVEDTLKIKADVFGHHGVLESGSLKVGDAVQAEVDTQLRAATMRNHSVTHIMHKALREVLGDHVQQKGSLVNAERTRFDFAHNQPVTAEEIREIERRVNAEILANTPTDARVMDIESAKATGAMMLFGEKYGDSVRVLDIGSSRELCGGTHVQRTGDIGLFKVVGEGGVAAGVRRIEAVTGENALAYLQSLESTVDQAAAALKAPTAELNTRIGGALEQIRALEKEVAALKGKLASSQGDELAGQAVDVKGIKVLAARLEGADAKTLRDTMDKLKDKLGAAAIVLAAVDGDKVQLAAGVTKAETSRIKAGDLVNFVASQVGGKGGGKPDMAMAGGTDASGLPAALAGVHAWVAERV</sequence>
<evidence type="ECO:0000255" key="1">
    <source>
        <dbReference type="HAMAP-Rule" id="MF_00036"/>
    </source>
</evidence>